<name>DER_LACLA</name>
<sequence>MSLPTVAIVGRPNVGKSTIFNRIAGERISIVEDIPGVTRDRIYATGEWLTRKFNIIDTGGIELSDEPFMTEIRAQAEIAMTEADVIIAVVDGETGITDADEAVANILYRTDKPVILVVNKVDNPERRMEIFDFYSLGLGDPYPVSAVHGIGTGDVLDAIVQNLPNEIEEENENVIKFSLIGRPNVGKSSLINAILGEDRVIASPIAGTTRDAIDTHFVDSEDQEFVMIDTAGMRKSGKIYENTEKYSVMRAMRAIDRSDIVLMVINAEEGIREYDMRIAGFAHEAGKGILIVVNKWDTLEKDNDTMKNFELEIRTKFKFLDYAPIVYVSAKTGQRLNKLPDMIKEIHHAQNLRISSSVLNDVIMDAVAINPTPTDKGKRLKIFYATQVAIKPPTFVVFVNEEELMHFSYLRFLENQIRKAFVFEGTPVHLIARKRK</sequence>
<comment type="function">
    <text evidence="1">GTPase that plays an essential role in the late steps of ribosome biogenesis.</text>
</comment>
<comment type="subunit">
    <text evidence="1">Associates with the 50S ribosomal subunit.</text>
</comment>
<comment type="similarity">
    <text evidence="1">Belongs to the TRAFAC class TrmE-Era-EngA-EngB-Septin-like GTPase superfamily. EngA (Der) GTPase family.</text>
</comment>
<reference key="1">
    <citation type="journal article" date="2001" name="Genome Res.">
        <title>The complete genome sequence of the lactic acid bacterium Lactococcus lactis ssp. lactis IL1403.</title>
        <authorList>
            <person name="Bolotin A."/>
            <person name="Wincker P."/>
            <person name="Mauger S."/>
            <person name="Jaillon O."/>
            <person name="Malarme K."/>
            <person name="Weissenbach J."/>
            <person name="Ehrlich S.D."/>
            <person name="Sorokin A."/>
        </authorList>
    </citation>
    <scope>NUCLEOTIDE SEQUENCE [LARGE SCALE GENOMIC DNA]</scope>
    <source>
        <strain>IL1403</strain>
    </source>
</reference>
<feature type="chain" id="PRO_0000179003" description="GTPase Der">
    <location>
        <begin position="1"/>
        <end position="436"/>
    </location>
</feature>
<feature type="domain" description="EngA-type G 1">
    <location>
        <begin position="4"/>
        <end position="167"/>
    </location>
</feature>
<feature type="domain" description="EngA-type G 2">
    <location>
        <begin position="175"/>
        <end position="351"/>
    </location>
</feature>
<feature type="domain" description="KH-like" evidence="1">
    <location>
        <begin position="352"/>
        <end position="436"/>
    </location>
</feature>
<feature type="binding site" evidence="1">
    <location>
        <begin position="10"/>
        <end position="17"/>
    </location>
    <ligand>
        <name>GTP</name>
        <dbReference type="ChEBI" id="CHEBI:37565"/>
        <label>1</label>
    </ligand>
</feature>
<feature type="binding site" evidence="1">
    <location>
        <begin position="57"/>
        <end position="61"/>
    </location>
    <ligand>
        <name>GTP</name>
        <dbReference type="ChEBI" id="CHEBI:37565"/>
        <label>1</label>
    </ligand>
</feature>
<feature type="binding site" evidence="1">
    <location>
        <begin position="119"/>
        <end position="122"/>
    </location>
    <ligand>
        <name>GTP</name>
        <dbReference type="ChEBI" id="CHEBI:37565"/>
        <label>1</label>
    </ligand>
</feature>
<feature type="binding site" evidence="1">
    <location>
        <begin position="181"/>
        <end position="188"/>
    </location>
    <ligand>
        <name>GTP</name>
        <dbReference type="ChEBI" id="CHEBI:37565"/>
        <label>2</label>
    </ligand>
</feature>
<feature type="binding site" evidence="1">
    <location>
        <begin position="229"/>
        <end position="233"/>
    </location>
    <ligand>
        <name>GTP</name>
        <dbReference type="ChEBI" id="CHEBI:37565"/>
        <label>2</label>
    </ligand>
</feature>
<feature type="binding site" evidence="1">
    <location>
        <begin position="294"/>
        <end position="297"/>
    </location>
    <ligand>
        <name>GTP</name>
        <dbReference type="ChEBI" id="CHEBI:37565"/>
        <label>2</label>
    </ligand>
</feature>
<proteinExistence type="inferred from homology"/>
<evidence type="ECO:0000255" key="1">
    <source>
        <dbReference type="HAMAP-Rule" id="MF_00195"/>
    </source>
</evidence>
<keyword id="KW-0342">GTP-binding</keyword>
<keyword id="KW-0547">Nucleotide-binding</keyword>
<keyword id="KW-1185">Reference proteome</keyword>
<keyword id="KW-0677">Repeat</keyword>
<keyword id="KW-0690">Ribosome biogenesis</keyword>
<dbReference type="EMBL" id="AE005176">
    <property type="protein sequence ID" value="AAK04853.1"/>
    <property type="molecule type" value="Genomic_DNA"/>
</dbReference>
<dbReference type="PIR" id="C86719">
    <property type="entry name" value="C86719"/>
</dbReference>
<dbReference type="RefSeq" id="NP_266911.1">
    <property type="nucleotide sequence ID" value="NC_002662.1"/>
</dbReference>
<dbReference type="RefSeq" id="WP_003132476.1">
    <property type="nucleotide sequence ID" value="NC_002662.1"/>
</dbReference>
<dbReference type="SMR" id="Q9CHH6"/>
<dbReference type="PaxDb" id="272623-L0156"/>
<dbReference type="EnsemblBacteria" id="AAK04853">
    <property type="protein sequence ID" value="AAK04853"/>
    <property type="gene ID" value="L0156"/>
</dbReference>
<dbReference type="GeneID" id="89632888"/>
<dbReference type="KEGG" id="lla:L0156"/>
<dbReference type="PATRIC" id="fig|272623.7.peg.810"/>
<dbReference type="eggNOG" id="COG1160">
    <property type="taxonomic scope" value="Bacteria"/>
</dbReference>
<dbReference type="HOGENOM" id="CLU_016077_6_2_9"/>
<dbReference type="OrthoDB" id="9805918at2"/>
<dbReference type="Proteomes" id="UP000002196">
    <property type="component" value="Chromosome"/>
</dbReference>
<dbReference type="GO" id="GO:0005525">
    <property type="term" value="F:GTP binding"/>
    <property type="evidence" value="ECO:0007669"/>
    <property type="project" value="UniProtKB-UniRule"/>
</dbReference>
<dbReference type="GO" id="GO:0043022">
    <property type="term" value="F:ribosome binding"/>
    <property type="evidence" value="ECO:0007669"/>
    <property type="project" value="TreeGrafter"/>
</dbReference>
<dbReference type="GO" id="GO:0042254">
    <property type="term" value="P:ribosome biogenesis"/>
    <property type="evidence" value="ECO:0007669"/>
    <property type="project" value="UniProtKB-KW"/>
</dbReference>
<dbReference type="CDD" id="cd01894">
    <property type="entry name" value="EngA1"/>
    <property type="match status" value="1"/>
</dbReference>
<dbReference type="CDD" id="cd01895">
    <property type="entry name" value="EngA2"/>
    <property type="match status" value="1"/>
</dbReference>
<dbReference type="FunFam" id="3.30.300.20:FF:000004">
    <property type="entry name" value="GTPase Der"/>
    <property type="match status" value="1"/>
</dbReference>
<dbReference type="FunFam" id="3.40.50.300:FF:000040">
    <property type="entry name" value="GTPase Der"/>
    <property type="match status" value="1"/>
</dbReference>
<dbReference type="FunFam" id="3.40.50.300:FF:000057">
    <property type="entry name" value="GTPase Der"/>
    <property type="match status" value="1"/>
</dbReference>
<dbReference type="Gene3D" id="3.30.300.20">
    <property type="match status" value="1"/>
</dbReference>
<dbReference type="Gene3D" id="3.40.50.300">
    <property type="entry name" value="P-loop containing nucleotide triphosphate hydrolases"/>
    <property type="match status" value="2"/>
</dbReference>
<dbReference type="HAMAP" id="MF_00195">
    <property type="entry name" value="GTPase_Der"/>
    <property type="match status" value="1"/>
</dbReference>
<dbReference type="InterPro" id="IPR031166">
    <property type="entry name" value="G_ENGA"/>
</dbReference>
<dbReference type="InterPro" id="IPR006073">
    <property type="entry name" value="GTP-bd"/>
</dbReference>
<dbReference type="InterPro" id="IPR016484">
    <property type="entry name" value="GTPase_Der"/>
</dbReference>
<dbReference type="InterPro" id="IPR032859">
    <property type="entry name" value="KH_dom-like"/>
</dbReference>
<dbReference type="InterPro" id="IPR015946">
    <property type="entry name" value="KH_dom-like_a/b"/>
</dbReference>
<dbReference type="InterPro" id="IPR027417">
    <property type="entry name" value="P-loop_NTPase"/>
</dbReference>
<dbReference type="InterPro" id="IPR005225">
    <property type="entry name" value="Small_GTP-bd"/>
</dbReference>
<dbReference type="NCBIfam" id="TIGR03594">
    <property type="entry name" value="GTPase_EngA"/>
    <property type="match status" value="1"/>
</dbReference>
<dbReference type="NCBIfam" id="TIGR00231">
    <property type="entry name" value="small_GTP"/>
    <property type="match status" value="2"/>
</dbReference>
<dbReference type="PANTHER" id="PTHR43834">
    <property type="entry name" value="GTPASE DER"/>
    <property type="match status" value="1"/>
</dbReference>
<dbReference type="PANTHER" id="PTHR43834:SF6">
    <property type="entry name" value="GTPASE DER"/>
    <property type="match status" value="1"/>
</dbReference>
<dbReference type="Pfam" id="PF14714">
    <property type="entry name" value="KH_dom-like"/>
    <property type="match status" value="1"/>
</dbReference>
<dbReference type="Pfam" id="PF01926">
    <property type="entry name" value="MMR_HSR1"/>
    <property type="match status" value="2"/>
</dbReference>
<dbReference type="PIRSF" id="PIRSF006485">
    <property type="entry name" value="GTP-binding_EngA"/>
    <property type="match status" value="1"/>
</dbReference>
<dbReference type="PRINTS" id="PR00326">
    <property type="entry name" value="GTP1OBG"/>
</dbReference>
<dbReference type="SUPFAM" id="SSF52540">
    <property type="entry name" value="P-loop containing nucleoside triphosphate hydrolases"/>
    <property type="match status" value="2"/>
</dbReference>
<dbReference type="PROSITE" id="PS51712">
    <property type="entry name" value="G_ENGA"/>
    <property type="match status" value="2"/>
</dbReference>
<organism>
    <name type="scientific">Lactococcus lactis subsp. lactis (strain IL1403)</name>
    <name type="common">Streptococcus lactis</name>
    <dbReference type="NCBI Taxonomy" id="272623"/>
    <lineage>
        <taxon>Bacteria</taxon>
        <taxon>Bacillati</taxon>
        <taxon>Bacillota</taxon>
        <taxon>Bacilli</taxon>
        <taxon>Lactobacillales</taxon>
        <taxon>Streptococcaceae</taxon>
        <taxon>Lactococcus</taxon>
    </lineage>
</organism>
<gene>
    <name evidence="1" type="primary">der</name>
    <name type="synonym">engA</name>
    <name type="synonym">yphL</name>
    <name type="ordered locus">LL0755</name>
    <name type="ORF">L0156</name>
</gene>
<protein>
    <recommendedName>
        <fullName evidence="1">GTPase Der</fullName>
    </recommendedName>
    <alternativeName>
        <fullName evidence="1">GTP-binding protein EngA</fullName>
    </alternativeName>
</protein>
<accession>Q9CHH6</accession>